<reference key="1">
    <citation type="journal article" date="1999" name="Nature">
        <title>Sequence and analysis of chromosome 4 of the plant Arabidopsis thaliana.</title>
        <authorList>
            <person name="Mayer K.F.X."/>
            <person name="Schueller C."/>
            <person name="Wambutt R."/>
            <person name="Murphy G."/>
            <person name="Volckaert G."/>
            <person name="Pohl T."/>
            <person name="Duesterhoeft A."/>
            <person name="Stiekema W."/>
            <person name="Entian K.-D."/>
            <person name="Terryn N."/>
            <person name="Harris B."/>
            <person name="Ansorge W."/>
            <person name="Brandt P."/>
            <person name="Grivell L.A."/>
            <person name="Rieger M."/>
            <person name="Weichselgartner M."/>
            <person name="de Simone V."/>
            <person name="Obermaier B."/>
            <person name="Mache R."/>
            <person name="Mueller M."/>
            <person name="Kreis M."/>
            <person name="Delseny M."/>
            <person name="Puigdomenech P."/>
            <person name="Watson M."/>
            <person name="Schmidtheini T."/>
            <person name="Reichert B."/>
            <person name="Portetelle D."/>
            <person name="Perez-Alonso M."/>
            <person name="Boutry M."/>
            <person name="Bancroft I."/>
            <person name="Vos P."/>
            <person name="Hoheisel J."/>
            <person name="Zimmermann W."/>
            <person name="Wedler H."/>
            <person name="Ridley P."/>
            <person name="Langham S.-A."/>
            <person name="McCullagh B."/>
            <person name="Bilham L."/>
            <person name="Robben J."/>
            <person name="van der Schueren J."/>
            <person name="Grymonprez B."/>
            <person name="Chuang Y.-J."/>
            <person name="Vandenbussche F."/>
            <person name="Braeken M."/>
            <person name="Weltjens I."/>
            <person name="Voet M."/>
            <person name="Bastiaens I."/>
            <person name="Aert R."/>
            <person name="Defoor E."/>
            <person name="Weitzenegger T."/>
            <person name="Bothe G."/>
            <person name="Ramsperger U."/>
            <person name="Hilbert H."/>
            <person name="Braun M."/>
            <person name="Holzer E."/>
            <person name="Brandt A."/>
            <person name="Peters S."/>
            <person name="van Staveren M."/>
            <person name="Dirkse W."/>
            <person name="Mooijman P."/>
            <person name="Klein Lankhorst R."/>
            <person name="Rose M."/>
            <person name="Hauf J."/>
            <person name="Koetter P."/>
            <person name="Berneiser S."/>
            <person name="Hempel S."/>
            <person name="Feldpausch M."/>
            <person name="Lamberth S."/>
            <person name="Van den Daele H."/>
            <person name="De Keyser A."/>
            <person name="Buysshaert C."/>
            <person name="Gielen J."/>
            <person name="Villarroel R."/>
            <person name="De Clercq R."/>
            <person name="van Montagu M."/>
            <person name="Rogers J."/>
            <person name="Cronin A."/>
            <person name="Quail M.A."/>
            <person name="Bray-Allen S."/>
            <person name="Clark L."/>
            <person name="Doggett J."/>
            <person name="Hall S."/>
            <person name="Kay M."/>
            <person name="Lennard N."/>
            <person name="McLay K."/>
            <person name="Mayes R."/>
            <person name="Pettett A."/>
            <person name="Rajandream M.A."/>
            <person name="Lyne M."/>
            <person name="Benes V."/>
            <person name="Rechmann S."/>
            <person name="Borkova D."/>
            <person name="Bloecker H."/>
            <person name="Scharfe M."/>
            <person name="Grimm M."/>
            <person name="Loehnert T.-H."/>
            <person name="Dose S."/>
            <person name="de Haan M."/>
            <person name="Maarse A.C."/>
            <person name="Schaefer M."/>
            <person name="Mueller-Auer S."/>
            <person name="Gabel C."/>
            <person name="Fuchs M."/>
            <person name="Fartmann B."/>
            <person name="Granderath K."/>
            <person name="Dauner D."/>
            <person name="Herzl A."/>
            <person name="Neumann S."/>
            <person name="Argiriou A."/>
            <person name="Vitale D."/>
            <person name="Liguori R."/>
            <person name="Piravandi E."/>
            <person name="Massenet O."/>
            <person name="Quigley F."/>
            <person name="Clabauld G."/>
            <person name="Muendlein A."/>
            <person name="Felber R."/>
            <person name="Schnabl S."/>
            <person name="Hiller R."/>
            <person name="Schmidt W."/>
            <person name="Lecharny A."/>
            <person name="Aubourg S."/>
            <person name="Chefdor F."/>
            <person name="Cooke R."/>
            <person name="Berger C."/>
            <person name="Monfort A."/>
            <person name="Casacuberta E."/>
            <person name="Gibbons T."/>
            <person name="Weber N."/>
            <person name="Vandenbol M."/>
            <person name="Bargues M."/>
            <person name="Terol J."/>
            <person name="Torres A."/>
            <person name="Perez-Perez A."/>
            <person name="Purnelle B."/>
            <person name="Bent E."/>
            <person name="Johnson S."/>
            <person name="Tacon D."/>
            <person name="Jesse T."/>
            <person name="Heijnen L."/>
            <person name="Schwarz S."/>
            <person name="Scholler P."/>
            <person name="Heber S."/>
            <person name="Francs P."/>
            <person name="Bielke C."/>
            <person name="Frishman D."/>
            <person name="Haase D."/>
            <person name="Lemcke K."/>
            <person name="Mewes H.-W."/>
            <person name="Stocker S."/>
            <person name="Zaccaria P."/>
            <person name="Bevan M."/>
            <person name="Wilson R.K."/>
            <person name="de la Bastide M."/>
            <person name="Habermann K."/>
            <person name="Parnell L."/>
            <person name="Dedhia N."/>
            <person name="Gnoj L."/>
            <person name="Schutz K."/>
            <person name="Huang E."/>
            <person name="Spiegel L."/>
            <person name="Sekhon M."/>
            <person name="Murray J."/>
            <person name="Sheet P."/>
            <person name="Cordes M."/>
            <person name="Abu-Threideh J."/>
            <person name="Stoneking T."/>
            <person name="Kalicki J."/>
            <person name="Graves T."/>
            <person name="Harmon G."/>
            <person name="Edwards J."/>
            <person name="Latreille P."/>
            <person name="Courtney L."/>
            <person name="Cloud J."/>
            <person name="Abbott A."/>
            <person name="Scott K."/>
            <person name="Johnson D."/>
            <person name="Minx P."/>
            <person name="Bentley D."/>
            <person name="Fulton B."/>
            <person name="Miller N."/>
            <person name="Greco T."/>
            <person name="Kemp K."/>
            <person name="Kramer J."/>
            <person name="Fulton L."/>
            <person name="Mardis E."/>
            <person name="Dante M."/>
            <person name="Pepin K."/>
            <person name="Hillier L.W."/>
            <person name="Nelson J."/>
            <person name="Spieth J."/>
            <person name="Ryan E."/>
            <person name="Andrews S."/>
            <person name="Geisel C."/>
            <person name="Layman D."/>
            <person name="Du H."/>
            <person name="Ali J."/>
            <person name="Berghoff A."/>
            <person name="Jones K."/>
            <person name="Drone K."/>
            <person name="Cotton M."/>
            <person name="Joshu C."/>
            <person name="Antonoiu B."/>
            <person name="Zidanic M."/>
            <person name="Strong C."/>
            <person name="Sun H."/>
            <person name="Lamar B."/>
            <person name="Yordan C."/>
            <person name="Ma P."/>
            <person name="Zhong J."/>
            <person name="Preston R."/>
            <person name="Vil D."/>
            <person name="Shekher M."/>
            <person name="Matero A."/>
            <person name="Shah R."/>
            <person name="Swaby I.K."/>
            <person name="O'Shaughnessy A."/>
            <person name="Rodriguez M."/>
            <person name="Hoffman J."/>
            <person name="Till S."/>
            <person name="Granat S."/>
            <person name="Shohdy N."/>
            <person name="Hasegawa A."/>
            <person name="Hameed A."/>
            <person name="Lodhi M."/>
            <person name="Johnson A."/>
            <person name="Chen E."/>
            <person name="Marra M.A."/>
            <person name="Martienssen R."/>
            <person name="McCombie W.R."/>
        </authorList>
    </citation>
    <scope>NUCLEOTIDE SEQUENCE [LARGE SCALE GENOMIC DNA]</scope>
    <source>
        <strain>cv. Columbia</strain>
    </source>
</reference>
<reference key="2">
    <citation type="journal article" date="2017" name="Plant J.">
        <title>Araport11: a complete reannotation of the Arabidopsis thaliana reference genome.</title>
        <authorList>
            <person name="Cheng C.Y."/>
            <person name="Krishnakumar V."/>
            <person name="Chan A.P."/>
            <person name="Thibaud-Nissen F."/>
            <person name="Schobel S."/>
            <person name="Town C.D."/>
        </authorList>
    </citation>
    <scope>GENOME REANNOTATION</scope>
    <source>
        <strain>cv. Columbia</strain>
    </source>
</reference>
<reference key="3">
    <citation type="journal article" date="2003" name="Science">
        <title>Empirical analysis of transcriptional activity in the Arabidopsis genome.</title>
        <authorList>
            <person name="Yamada K."/>
            <person name="Lim J."/>
            <person name="Dale J.M."/>
            <person name="Chen H."/>
            <person name="Shinn P."/>
            <person name="Palm C.J."/>
            <person name="Southwick A.M."/>
            <person name="Wu H.C."/>
            <person name="Kim C.J."/>
            <person name="Nguyen M."/>
            <person name="Pham P.K."/>
            <person name="Cheuk R.F."/>
            <person name="Karlin-Newmann G."/>
            <person name="Liu S.X."/>
            <person name="Lam B."/>
            <person name="Sakano H."/>
            <person name="Wu T."/>
            <person name="Yu G."/>
            <person name="Miranda M."/>
            <person name="Quach H.L."/>
            <person name="Tripp M."/>
            <person name="Chang C.H."/>
            <person name="Lee J.M."/>
            <person name="Toriumi M.J."/>
            <person name="Chan M.M."/>
            <person name="Tang C.C."/>
            <person name="Onodera C.S."/>
            <person name="Deng J.M."/>
            <person name="Akiyama K."/>
            <person name="Ansari Y."/>
            <person name="Arakawa T."/>
            <person name="Banh J."/>
            <person name="Banno F."/>
            <person name="Bowser L."/>
            <person name="Brooks S.Y."/>
            <person name="Carninci P."/>
            <person name="Chao Q."/>
            <person name="Choy N."/>
            <person name="Enju A."/>
            <person name="Goldsmith A.D."/>
            <person name="Gurjal M."/>
            <person name="Hansen N.F."/>
            <person name="Hayashizaki Y."/>
            <person name="Johnson-Hopson C."/>
            <person name="Hsuan V.W."/>
            <person name="Iida K."/>
            <person name="Karnes M."/>
            <person name="Khan S."/>
            <person name="Koesema E."/>
            <person name="Ishida J."/>
            <person name="Jiang P.X."/>
            <person name="Jones T."/>
            <person name="Kawai J."/>
            <person name="Kamiya A."/>
            <person name="Meyers C."/>
            <person name="Nakajima M."/>
            <person name="Narusaka M."/>
            <person name="Seki M."/>
            <person name="Sakurai T."/>
            <person name="Satou M."/>
            <person name="Tamse R."/>
            <person name="Vaysberg M."/>
            <person name="Wallender E.K."/>
            <person name="Wong C."/>
            <person name="Yamamura Y."/>
            <person name="Yuan S."/>
            <person name="Shinozaki K."/>
            <person name="Davis R.W."/>
            <person name="Theologis A."/>
            <person name="Ecker J.R."/>
        </authorList>
    </citation>
    <scope>NUCLEOTIDE SEQUENCE [LARGE SCALE MRNA] (ISOFORM 1)</scope>
    <source>
        <strain>cv. Columbia</strain>
    </source>
</reference>
<reference key="4">
    <citation type="journal article" date="2004" name="Genome Res.">
        <title>Whole genome sequence comparisons and 'full-length' cDNA sequences: a combined approach to evaluate and improve Arabidopsis genome annotation.</title>
        <authorList>
            <person name="Castelli V."/>
            <person name="Aury J.-M."/>
            <person name="Jaillon O."/>
            <person name="Wincker P."/>
            <person name="Clepet C."/>
            <person name="Menard M."/>
            <person name="Cruaud C."/>
            <person name="Quetier F."/>
            <person name="Scarpelli C."/>
            <person name="Schaechter V."/>
            <person name="Temple G."/>
            <person name="Caboche M."/>
            <person name="Weissenbach J."/>
            <person name="Salanoubat M."/>
        </authorList>
    </citation>
    <scope>NUCLEOTIDE SEQUENCE [LARGE SCALE MRNA] (ISOFORM 2)</scope>
    <source>
        <strain>cv. Columbia</strain>
    </source>
</reference>
<reference key="5">
    <citation type="journal article" date="2009" name="Plant Physiol.">
        <title>Large-scale Arabidopsis phosphoproteome profiling reveals novel chloroplast kinase substrates and phosphorylation networks.</title>
        <authorList>
            <person name="Reiland S."/>
            <person name="Messerli G."/>
            <person name="Baerenfaller K."/>
            <person name="Gerrits B."/>
            <person name="Endler A."/>
            <person name="Grossmann J."/>
            <person name="Gruissem W."/>
            <person name="Baginsky S."/>
        </authorList>
    </citation>
    <scope>PHOSPHORYLATION [LARGE SCALE ANALYSIS] AT SER-208 AND SER-415</scope>
    <scope>IDENTIFICATION BY MASS SPECTROMETRY [LARGE SCALE ANALYSIS]</scope>
</reference>
<reference key="6">
    <citation type="journal article" date="2013" name="Plant Cell">
        <title>Light-regulated hypocotyl elongation involves proteasome-dependent degradation of the microtubule regulatory protein WDL3 in Arabidopsis.</title>
        <authorList>
            <person name="Liu X."/>
            <person name="Qin T."/>
            <person name="Ma Q."/>
            <person name="Sun J."/>
            <person name="Liu Z."/>
            <person name="Yuan M."/>
            <person name="Mao T."/>
        </authorList>
    </citation>
    <scope>TISSUE SPECIFICITY</scope>
</reference>
<protein>
    <recommendedName>
        <fullName evidence="5">Protein WVD2-like 5</fullName>
    </recommendedName>
</protein>
<gene>
    <name evidence="4" type="primary">WDL5</name>
    <name evidence="6" type="ordered locus">At4g32330</name>
    <name evidence="7" type="ORF">F10M6.40</name>
    <name evidence="8" type="ORF">F8B4.30</name>
</gene>
<organism>
    <name type="scientific">Arabidopsis thaliana</name>
    <name type="common">Mouse-ear cress</name>
    <dbReference type="NCBI Taxonomy" id="3702"/>
    <lineage>
        <taxon>Eukaryota</taxon>
        <taxon>Viridiplantae</taxon>
        <taxon>Streptophyta</taxon>
        <taxon>Embryophyta</taxon>
        <taxon>Tracheophyta</taxon>
        <taxon>Spermatophyta</taxon>
        <taxon>Magnoliopsida</taxon>
        <taxon>eudicotyledons</taxon>
        <taxon>Gunneridae</taxon>
        <taxon>Pentapetalae</taxon>
        <taxon>rosids</taxon>
        <taxon>malvids</taxon>
        <taxon>Brassicales</taxon>
        <taxon>Brassicaceae</taxon>
        <taxon>Camelineae</taxon>
        <taxon>Arabidopsis</taxon>
    </lineage>
</organism>
<proteinExistence type="evidence at protein level"/>
<keyword id="KW-0025">Alternative splicing</keyword>
<keyword id="KW-0963">Cytoplasm</keyword>
<keyword id="KW-0206">Cytoskeleton</keyword>
<keyword id="KW-0493">Microtubule</keyword>
<keyword id="KW-0597">Phosphoprotein</keyword>
<keyword id="KW-1185">Reference proteome</keyword>
<dbReference type="EMBL" id="AL021811">
    <property type="protein sequence ID" value="CAA16958.1"/>
    <property type="status" value="ALT_SEQ"/>
    <property type="molecule type" value="Genomic_DNA"/>
</dbReference>
<dbReference type="EMBL" id="AL034567">
    <property type="protein sequence ID" value="CAA22560.1"/>
    <property type="status" value="ALT_SEQ"/>
    <property type="molecule type" value="Genomic_DNA"/>
</dbReference>
<dbReference type="EMBL" id="AL161581">
    <property type="protein sequence ID" value="CAB79950.1"/>
    <property type="status" value="ALT_SEQ"/>
    <property type="molecule type" value="Genomic_DNA"/>
</dbReference>
<dbReference type="EMBL" id="CP002687">
    <property type="protein sequence ID" value="AEE86040.1"/>
    <property type="molecule type" value="Genomic_DNA"/>
</dbReference>
<dbReference type="EMBL" id="CP002687">
    <property type="protein sequence ID" value="AEE86041.1"/>
    <property type="molecule type" value="Genomic_DNA"/>
</dbReference>
<dbReference type="EMBL" id="CP002687">
    <property type="protein sequence ID" value="AEE86042.1"/>
    <property type="molecule type" value="Genomic_DNA"/>
</dbReference>
<dbReference type="EMBL" id="CP002687">
    <property type="protein sequence ID" value="ANM66294.1"/>
    <property type="molecule type" value="Genomic_DNA"/>
</dbReference>
<dbReference type="EMBL" id="AY035182">
    <property type="protein sequence ID" value="AAK59686.1"/>
    <property type="molecule type" value="mRNA"/>
</dbReference>
<dbReference type="EMBL" id="AY113894">
    <property type="protein sequence ID" value="AAM44942.1"/>
    <property type="molecule type" value="mRNA"/>
</dbReference>
<dbReference type="EMBL" id="BX828309">
    <property type="status" value="NOT_ANNOTATED_CDS"/>
    <property type="molecule type" value="mRNA"/>
</dbReference>
<dbReference type="PIR" id="T05343">
    <property type="entry name" value="T05343"/>
</dbReference>
<dbReference type="PIR" id="T05396">
    <property type="entry name" value="T05396"/>
</dbReference>
<dbReference type="RefSeq" id="NP_001119094.1">
    <molecule id="Q94C48-1"/>
    <property type="nucleotide sequence ID" value="NM_001125622.2"/>
</dbReference>
<dbReference type="RefSeq" id="NP_001328200.1">
    <molecule id="Q94C48-1"/>
    <property type="nucleotide sequence ID" value="NM_001342134.1"/>
</dbReference>
<dbReference type="RefSeq" id="NP_567893.1">
    <molecule id="Q94C48-1"/>
    <property type="nucleotide sequence ID" value="NM_119385.3"/>
</dbReference>
<dbReference type="RefSeq" id="NP_974659.1">
    <molecule id="Q94C48-2"/>
    <property type="nucleotide sequence ID" value="NM_202930.1"/>
</dbReference>
<dbReference type="SMR" id="Q94C48"/>
<dbReference type="FunCoup" id="Q94C48">
    <property type="interactions" value="515"/>
</dbReference>
<dbReference type="STRING" id="3702.Q94C48"/>
<dbReference type="iPTMnet" id="Q94C48"/>
<dbReference type="MetOSite" id="Q94C48"/>
<dbReference type="PaxDb" id="3702-AT4G32330.1"/>
<dbReference type="ProteomicsDB" id="242546">
    <molecule id="Q94C48-1"/>
</dbReference>
<dbReference type="DNASU" id="829367"/>
<dbReference type="EnsemblPlants" id="AT4G32330.1">
    <molecule id="Q94C48-1"/>
    <property type="protein sequence ID" value="AT4G32330.1"/>
    <property type="gene ID" value="AT4G32330"/>
</dbReference>
<dbReference type="EnsemblPlants" id="AT4G32330.2">
    <molecule id="Q94C48-2"/>
    <property type="protein sequence ID" value="AT4G32330.2"/>
    <property type="gene ID" value="AT4G32330"/>
</dbReference>
<dbReference type="EnsemblPlants" id="AT4G32330.3">
    <molecule id="Q94C48-1"/>
    <property type="protein sequence ID" value="AT4G32330.3"/>
    <property type="gene ID" value="AT4G32330"/>
</dbReference>
<dbReference type="EnsemblPlants" id="AT4G32330.4">
    <molecule id="Q94C48-1"/>
    <property type="protein sequence ID" value="AT4G32330.4"/>
    <property type="gene ID" value="AT4G32330"/>
</dbReference>
<dbReference type="GeneID" id="829367"/>
<dbReference type="Gramene" id="AT4G32330.1">
    <molecule id="Q94C48-1"/>
    <property type="protein sequence ID" value="AT4G32330.1"/>
    <property type="gene ID" value="AT4G32330"/>
</dbReference>
<dbReference type="Gramene" id="AT4G32330.2">
    <molecule id="Q94C48-2"/>
    <property type="protein sequence ID" value="AT4G32330.2"/>
    <property type="gene ID" value="AT4G32330"/>
</dbReference>
<dbReference type="Gramene" id="AT4G32330.3">
    <molecule id="Q94C48-1"/>
    <property type="protein sequence ID" value="AT4G32330.3"/>
    <property type="gene ID" value="AT4G32330"/>
</dbReference>
<dbReference type="Gramene" id="AT4G32330.4">
    <molecule id="Q94C48-1"/>
    <property type="protein sequence ID" value="AT4G32330.4"/>
    <property type="gene ID" value="AT4G32330"/>
</dbReference>
<dbReference type="KEGG" id="ath:AT4G32330"/>
<dbReference type="Araport" id="AT4G32330"/>
<dbReference type="TAIR" id="AT4G32330">
    <property type="gene designation" value="WDL5"/>
</dbReference>
<dbReference type="eggNOG" id="ENOG502REWY">
    <property type="taxonomic scope" value="Eukaryota"/>
</dbReference>
<dbReference type="HOGENOM" id="CLU_047642_0_0_1"/>
<dbReference type="InParanoid" id="Q94C48"/>
<dbReference type="OMA" id="LQNGMND"/>
<dbReference type="PhylomeDB" id="Q94C48"/>
<dbReference type="CD-CODE" id="4299E36E">
    <property type="entry name" value="Nucleolus"/>
</dbReference>
<dbReference type="PRO" id="PR:Q94C48"/>
<dbReference type="Proteomes" id="UP000006548">
    <property type="component" value="Chromosome 4"/>
</dbReference>
<dbReference type="ExpressionAtlas" id="Q94C48">
    <property type="expression patterns" value="baseline and differential"/>
</dbReference>
<dbReference type="GO" id="GO:0005737">
    <property type="term" value="C:cytoplasm"/>
    <property type="evidence" value="ECO:0007669"/>
    <property type="project" value="UniProtKB-KW"/>
</dbReference>
<dbReference type="GO" id="GO:0005874">
    <property type="term" value="C:microtubule"/>
    <property type="evidence" value="ECO:0007669"/>
    <property type="project" value="UniProtKB-KW"/>
</dbReference>
<dbReference type="GO" id="GO:0008017">
    <property type="term" value="F:microtubule binding"/>
    <property type="evidence" value="ECO:0000314"/>
    <property type="project" value="TAIR"/>
</dbReference>
<dbReference type="GO" id="GO:0071369">
    <property type="term" value="P:cellular response to ethylene stimulus"/>
    <property type="evidence" value="ECO:0000315"/>
    <property type="project" value="TAIR"/>
</dbReference>
<dbReference type="GO" id="GO:0001578">
    <property type="term" value="P:microtubule bundle formation"/>
    <property type="evidence" value="ECO:0000315"/>
    <property type="project" value="TAIR"/>
</dbReference>
<dbReference type="InterPro" id="IPR027329">
    <property type="entry name" value="TPX2_C"/>
</dbReference>
<dbReference type="InterPro" id="IPR044833">
    <property type="entry name" value="WDL5/6"/>
</dbReference>
<dbReference type="PANTHER" id="PTHR31358">
    <property type="entry name" value="PROTEIN WVD2-LIKE 4"/>
    <property type="match status" value="1"/>
</dbReference>
<dbReference type="PANTHER" id="PTHR31358:SF29">
    <property type="entry name" value="PROTEIN WVD2-LIKE 5-RELATED"/>
    <property type="match status" value="1"/>
</dbReference>
<dbReference type="Pfam" id="PF06886">
    <property type="entry name" value="TPX2"/>
    <property type="match status" value="1"/>
</dbReference>
<evidence type="ECO:0000250" key="1">
    <source>
        <dbReference type="UniProtKB" id="Q8GYX9"/>
    </source>
</evidence>
<evidence type="ECO:0000256" key="2">
    <source>
        <dbReference type="SAM" id="MobiDB-lite"/>
    </source>
</evidence>
<evidence type="ECO:0000269" key="3">
    <source>
    </source>
</evidence>
<evidence type="ECO:0000303" key="4">
    <source>
    </source>
</evidence>
<evidence type="ECO:0000305" key="5"/>
<evidence type="ECO:0000312" key="6">
    <source>
        <dbReference type="Araport" id="AT4G32330"/>
    </source>
</evidence>
<evidence type="ECO:0000312" key="7">
    <source>
        <dbReference type="EMBL" id="CAA16958.1"/>
    </source>
</evidence>
<evidence type="ECO:0000312" key="8">
    <source>
        <dbReference type="EMBL" id="CAA22560.1"/>
    </source>
</evidence>
<evidence type="ECO:0007744" key="9">
    <source>
    </source>
</evidence>
<sequence length="437" mass="47543">MDPESIMAADGTDSAPANGGLAMENVCVKENGAVSVETVDTTSESQNENSANSSTLDTIEHVKEAAEGTQVEHVDDSKCMKGEKAQRKPRHEKLSGGKNNSSVHIKKSKEGKSADAKVAASNGSVAPNVQTTNPLKSKSFNGREAQVTKQGKHDSAPAESADGEKVKPKSQKKQAHETSEDDTQSSNSPKADDGKPRKVGALPNYGFSFKCDQRAEKRKEFYVKLEEKTHAKEEEINSMQAKSKETQEAELRMLRKSLNFKATPMPSFYQEPQPPKTELKKIPPTRPKSPKLGRKKTASGADSEETQTPRLGRLSLDERASKDNPTAKGIMPTVDLKKQPVRKSLPRLPSQKTVLPDGKPAPAKAAIIPAKVRPEKKKLEKDAETVNQTSHPTEEEAQVTVSSNADVEDSHETVSPRMNEDRADKSIEVSEAVAVEH</sequence>
<name>WDL5_ARATH</name>
<accession>Q94C48</accession>
<accession>F4JU98</accession>
<accession>O49359</accession>
<accession>Q9SUV5</accession>
<comment type="function">
    <text evidence="1">Microtubule-associated protein (MAP) that regulates the orientation of interphase cortical microtubules.</text>
</comment>
<comment type="subcellular location">
    <subcellularLocation>
        <location evidence="1">Cytoplasm</location>
        <location evidence="1">Cytoskeleton</location>
    </subcellularLocation>
</comment>
<comment type="alternative products">
    <event type="alternative splicing"/>
    <isoform>
        <id>Q94C48-1</id>
        <name>1</name>
        <sequence type="displayed"/>
    </isoform>
    <isoform>
        <id>Q94C48-2</id>
        <name>2</name>
        <sequence type="described" ref="VSP_058146"/>
    </isoform>
</comment>
<comment type="tissue specificity">
    <text evidence="3">Expressed in seedlings.</text>
</comment>
<comment type="miscellaneous">
    <molecule>Isoform 2</molecule>
    <text evidence="5">May be due to a competing acceptor splice site.</text>
</comment>
<comment type="similarity">
    <text evidence="5">Belongs to the TPX2 family.</text>
</comment>
<comment type="sequence caution" evidence="5">
    <conflict type="erroneous gene model prediction">
        <sequence resource="EMBL-CDS" id="CAA16958"/>
    </conflict>
</comment>
<comment type="sequence caution" evidence="5">
    <conflict type="erroneous gene model prediction">
        <sequence resource="EMBL-CDS" id="CAA22560"/>
    </conflict>
</comment>
<comment type="sequence caution" evidence="5">
    <conflict type="erroneous gene model prediction">
        <sequence resource="EMBL-CDS" id="CAB79950"/>
    </conflict>
</comment>
<feature type="chain" id="PRO_0000435677" description="Protein WVD2-like 5">
    <location>
        <begin position="1"/>
        <end position="437"/>
    </location>
</feature>
<feature type="region of interest" description="Disordered" evidence="2">
    <location>
        <begin position="1"/>
        <end position="22"/>
    </location>
</feature>
<feature type="region of interest" description="Disordered" evidence="2">
    <location>
        <begin position="38"/>
        <end position="210"/>
    </location>
</feature>
<feature type="region of interest" description="Disordered" evidence="2">
    <location>
        <begin position="254"/>
        <end position="437"/>
    </location>
</feature>
<feature type="compositionally biased region" description="Low complexity" evidence="2">
    <location>
        <begin position="41"/>
        <end position="55"/>
    </location>
</feature>
<feature type="compositionally biased region" description="Basic and acidic residues" evidence="2">
    <location>
        <begin position="58"/>
        <end position="86"/>
    </location>
</feature>
<feature type="compositionally biased region" description="Polar residues" evidence="2">
    <location>
        <begin position="121"/>
        <end position="140"/>
    </location>
</feature>
<feature type="compositionally biased region" description="Basic and acidic residues" evidence="2">
    <location>
        <begin position="151"/>
        <end position="167"/>
    </location>
</feature>
<feature type="compositionally biased region" description="Basic residues" evidence="2">
    <location>
        <begin position="288"/>
        <end position="297"/>
    </location>
</feature>
<feature type="compositionally biased region" description="Low complexity" evidence="2">
    <location>
        <begin position="360"/>
        <end position="371"/>
    </location>
</feature>
<feature type="compositionally biased region" description="Basic and acidic residues" evidence="2">
    <location>
        <begin position="408"/>
        <end position="437"/>
    </location>
</feature>
<feature type="modified residue" description="Phosphoserine" evidence="9">
    <location>
        <position position="208"/>
    </location>
</feature>
<feature type="modified residue" description="Phosphoserine" evidence="9">
    <location>
        <position position="415"/>
    </location>
</feature>
<feature type="splice variant" id="VSP_058146" description="In isoform 2.">
    <location>
        <position position="188"/>
    </location>
</feature>